<reference key="1">
    <citation type="journal article" date="1992" name="Plant Physiol.">
        <title>The primary structure of a cDNA clone of the stearoyl-acyl carrier protein desaturase gene from potato (Solanum tuberosum L.).</title>
        <authorList>
            <person name="Taylor M.A."/>
            <person name="Smith S.B."/>
            <person name="Davies H.V."/>
            <person name="Burch L.R."/>
        </authorList>
    </citation>
    <scope>NUCLEOTIDE SEQUENCE [MRNA]</scope>
</reference>
<accession>P46253</accession>
<protein>
    <recommendedName>
        <fullName>Stearoyl-[acyl-carrier-protein] 9-desaturase, chloroplastic</fullName>
        <shortName>Stearoyl-ACP desaturase</shortName>
        <ecNumber evidence="2">1.14.19.2</ecNumber>
    </recommendedName>
    <alternativeName>
        <fullName>Acyl-[acyl-carrier-protein] desaturase</fullName>
    </alternativeName>
</protein>
<comment type="function">
    <text evidence="2">Converts stearoyl-ACP to oleoyl-ACP by introduction of a cis double bond between carbons 9 and 10 of the acyl chain.</text>
</comment>
<comment type="catalytic activity">
    <reaction evidence="2">
        <text>octadecanoyl-[ACP] + 2 reduced [2Fe-2S]-[ferredoxin] + O2 + 2 H(+) = (9Z)-octadecenoyl-[ACP] + 2 oxidized [2Fe-2S]-[ferredoxin] + 2 H2O</text>
        <dbReference type="Rhea" id="RHEA:11776"/>
        <dbReference type="Rhea" id="RHEA-COMP:9656"/>
        <dbReference type="Rhea" id="RHEA-COMP:9924"/>
        <dbReference type="Rhea" id="RHEA-COMP:10000"/>
        <dbReference type="Rhea" id="RHEA-COMP:10001"/>
        <dbReference type="ChEBI" id="CHEBI:15377"/>
        <dbReference type="ChEBI" id="CHEBI:15378"/>
        <dbReference type="ChEBI" id="CHEBI:15379"/>
        <dbReference type="ChEBI" id="CHEBI:33737"/>
        <dbReference type="ChEBI" id="CHEBI:33738"/>
        <dbReference type="ChEBI" id="CHEBI:78495"/>
        <dbReference type="ChEBI" id="CHEBI:78783"/>
        <dbReference type="EC" id="1.14.19.2"/>
    </reaction>
</comment>
<comment type="cofactor">
    <cofactor evidence="2">
        <name>Fe(2+)</name>
        <dbReference type="ChEBI" id="CHEBI:29033"/>
    </cofactor>
    <text evidence="2">Binds 2 Fe(2+) ions per subunit.</text>
</comment>
<comment type="pathway">
    <text>Lipid metabolism; fatty acid metabolism.</text>
</comment>
<comment type="subunit">
    <text evidence="2">Homodimer.</text>
</comment>
<comment type="subcellular location">
    <subcellularLocation>
        <location evidence="2">Plastid</location>
        <location evidence="2">Chloroplast</location>
    </subcellularLocation>
    <subcellularLocation>
        <location evidence="2">Plastid</location>
    </subcellularLocation>
    <text>In green tissue, found in chloroplasts. In non-photosynthetic tissue, found in plastids.</text>
</comment>
<comment type="similarity">
    <text evidence="3">Belongs to the fatty acid desaturase type 2 family.</text>
</comment>
<proteinExistence type="evidence at transcript level"/>
<evidence type="ECO:0000250" key="1">
    <source>
        <dbReference type="UniProtKB" id="P22243"/>
    </source>
</evidence>
<evidence type="ECO:0000250" key="2">
    <source>
        <dbReference type="UniProtKB" id="P22337"/>
    </source>
</evidence>
<evidence type="ECO:0000305" key="3"/>
<name>STAD_SOLTU</name>
<feature type="transit peptide" description="Chloroplast" evidence="1">
    <location>
        <begin position="1"/>
        <end position="30"/>
    </location>
</feature>
<feature type="chain" id="PRO_0000007140" description="Stearoyl-[acyl-carrier-protein] 9-desaturase, chloroplastic">
    <location>
        <begin position="31"/>
        <end position="393"/>
    </location>
</feature>
<feature type="binding site" evidence="2">
    <location>
        <position position="135"/>
    </location>
    <ligand>
        <name>Fe cation</name>
        <dbReference type="ChEBI" id="CHEBI:24875"/>
        <label>1</label>
    </ligand>
</feature>
<feature type="binding site" evidence="2">
    <location>
        <position position="173"/>
    </location>
    <ligand>
        <name>Fe cation</name>
        <dbReference type="ChEBI" id="CHEBI:24875"/>
        <label>1</label>
    </ligand>
</feature>
<feature type="binding site" evidence="2">
    <location>
        <position position="173"/>
    </location>
    <ligand>
        <name>Fe cation</name>
        <dbReference type="ChEBI" id="CHEBI:24875"/>
        <label>2</label>
    </ligand>
</feature>
<feature type="binding site" evidence="2">
    <location>
        <position position="176"/>
    </location>
    <ligand>
        <name>Fe cation</name>
        <dbReference type="ChEBI" id="CHEBI:24875"/>
        <label>1</label>
    </ligand>
</feature>
<feature type="binding site" evidence="2">
    <location>
        <position position="259"/>
    </location>
    <ligand>
        <name>Fe cation</name>
        <dbReference type="ChEBI" id="CHEBI:24875"/>
        <label>1</label>
    </ligand>
</feature>
<feature type="binding site" evidence="2">
    <location>
        <position position="259"/>
    </location>
    <ligand>
        <name>Fe cation</name>
        <dbReference type="ChEBI" id="CHEBI:24875"/>
        <label>2</label>
    </ligand>
</feature>
<feature type="binding site" evidence="2">
    <location>
        <position position="262"/>
    </location>
    <ligand>
        <name>Fe cation</name>
        <dbReference type="ChEBI" id="CHEBI:24875"/>
        <label>2</label>
    </ligand>
</feature>
<sequence>MALNINGVSLKSHKMLPFPCSSARSERVFMASTIHRPSVEVGSVKKAFTPPREVHVQVTHSMPPEKIEVFDSLRDWAAQNLLVHLKPVEKCWQPTDFLPDPASEGFDEQVKELRERCKEIPDDYFVVLIGDMITEEALPTYQTMINTLDGVRDETGATVTPWAIWTRAWTAEENRHGDLLNKYLYLSGRVDMKQIEKTIQYLIGSGMDPRTENNPYLGFVYTSLRKGVTFVSHGNTARLAKEHGDMKLAQICGSIAADEKRHETAYTKIVEKLLEVDPDGAVLAIGDMMRKNISMPAHLMYDGRDDNLFEHFSAVAQRLGVYTAKDYADILEFHVGRWEVEKLTGLSSEGRRAQDYVCGLAPRIRKLEERAQARAKHAKSVPFSWIFGKEIKL</sequence>
<organism>
    <name type="scientific">Solanum tuberosum</name>
    <name type="common">Potato</name>
    <dbReference type="NCBI Taxonomy" id="4113"/>
    <lineage>
        <taxon>Eukaryota</taxon>
        <taxon>Viridiplantae</taxon>
        <taxon>Streptophyta</taxon>
        <taxon>Embryophyta</taxon>
        <taxon>Tracheophyta</taxon>
        <taxon>Spermatophyta</taxon>
        <taxon>Magnoliopsida</taxon>
        <taxon>eudicotyledons</taxon>
        <taxon>Gunneridae</taxon>
        <taxon>Pentapetalae</taxon>
        <taxon>asterids</taxon>
        <taxon>lamiids</taxon>
        <taxon>Solanales</taxon>
        <taxon>Solanaceae</taxon>
        <taxon>Solanoideae</taxon>
        <taxon>Solaneae</taxon>
        <taxon>Solanum</taxon>
    </lineage>
</organism>
<keyword id="KW-0150">Chloroplast</keyword>
<keyword id="KW-0275">Fatty acid biosynthesis</keyword>
<keyword id="KW-0276">Fatty acid metabolism</keyword>
<keyword id="KW-0408">Iron</keyword>
<keyword id="KW-0444">Lipid biosynthesis</keyword>
<keyword id="KW-0443">Lipid metabolism</keyword>
<keyword id="KW-0479">Metal-binding</keyword>
<keyword id="KW-0560">Oxidoreductase</keyword>
<keyword id="KW-0934">Plastid</keyword>
<keyword id="KW-1185">Reference proteome</keyword>
<keyword id="KW-0809">Transit peptide</keyword>
<dbReference type="EC" id="1.14.19.2" evidence="2"/>
<dbReference type="EMBL" id="M91238">
    <property type="protein sequence ID" value="AAA33839.1"/>
    <property type="molecule type" value="mRNA"/>
</dbReference>
<dbReference type="PIR" id="T07653">
    <property type="entry name" value="T07653"/>
</dbReference>
<dbReference type="RefSeq" id="NP_001275198.1">
    <property type="nucleotide sequence ID" value="NM_001288269.1"/>
</dbReference>
<dbReference type="SMR" id="P46253"/>
<dbReference type="STRING" id="4113.P46253"/>
<dbReference type="PaxDb" id="4113-PGSC0003DMT400041874"/>
<dbReference type="GeneID" id="102577562"/>
<dbReference type="KEGG" id="sot:102577562"/>
<dbReference type="eggNOG" id="ENOG502QRJK">
    <property type="taxonomic scope" value="Eukaryota"/>
</dbReference>
<dbReference type="InParanoid" id="P46253"/>
<dbReference type="OrthoDB" id="1924153at2759"/>
<dbReference type="UniPathway" id="UPA00199"/>
<dbReference type="Proteomes" id="UP000011115">
    <property type="component" value="Unassembled WGS sequence"/>
</dbReference>
<dbReference type="ExpressionAtlas" id="P46253">
    <property type="expression patterns" value="baseline and differential"/>
</dbReference>
<dbReference type="GO" id="GO:0009507">
    <property type="term" value="C:chloroplast"/>
    <property type="evidence" value="ECO:0007669"/>
    <property type="project" value="UniProtKB-SubCell"/>
</dbReference>
<dbReference type="GO" id="GO:0046872">
    <property type="term" value="F:metal ion binding"/>
    <property type="evidence" value="ECO:0007669"/>
    <property type="project" value="UniProtKB-KW"/>
</dbReference>
<dbReference type="GO" id="GO:0045300">
    <property type="term" value="F:stearoyl-[ACP] desaturase activity"/>
    <property type="evidence" value="ECO:0000318"/>
    <property type="project" value="GO_Central"/>
</dbReference>
<dbReference type="GO" id="GO:0006633">
    <property type="term" value="P:fatty acid biosynthetic process"/>
    <property type="evidence" value="ECO:0007669"/>
    <property type="project" value="UniProtKB-KW"/>
</dbReference>
<dbReference type="GO" id="GO:0006631">
    <property type="term" value="P:fatty acid metabolic process"/>
    <property type="evidence" value="ECO:0000318"/>
    <property type="project" value="GO_Central"/>
</dbReference>
<dbReference type="CDD" id="cd01050">
    <property type="entry name" value="Acyl_ACP_Desat"/>
    <property type="match status" value="1"/>
</dbReference>
<dbReference type="FunFam" id="1.10.620.20:FF:000002">
    <property type="entry name" value="Stearoyl-[acyl-carrier-protein] 9-desaturase, chloroplastic"/>
    <property type="match status" value="1"/>
</dbReference>
<dbReference type="Gene3D" id="1.10.620.20">
    <property type="entry name" value="Ribonucleotide Reductase, subunit A"/>
    <property type="match status" value="1"/>
</dbReference>
<dbReference type="InterPro" id="IPR005803">
    <property type="entry name" value="FADS-2_CS"/>
</dbReference>
<dbReference type="InterPro" id="IPR005067">
    <property type="entry name" value="Fatty_acid_desaturase-2"/>
</dbReference>
<dbReference type="InterPro" id="IPR009078">
    <property type="entry name" value="Ferritin-like_SF"/>
</dbReference>
<dbReference type="InterPro" id="IPR012348">
    <property type="entry name" value="RNR-like"/>
</dbReference>
<dbReference type="PANTHER" id="PTHR31155">
    <property type="entry name" value="ACYL- ACYL-CARRIER-PROTEIN DESATURASE-RELATED"/>
    <property type="match status" value="1"/>
</dbReference>
<dbReference type="PANTHER" id="PTHR31155:SF19">
    <property type="entry name" value="STEAROYL-[ACYL-CARRIER-PROTEIN] 9-DESATURASE, CHLOROPLASTIC"/>
    <property type="match status" value="1"/>
</dbReference>
<dbReference type="Pfam" id="PF03405">
    <property type="entry name" value="FA_desaturase_2"/>
    <property type="match status" value="1"/>
</dbReference>
<dbReference type="PIRSF" id="PIRSF000346">
    <property type="entry name" value="Dlt9_acylACP_des"/>
    <property type="match status" value="1"/>
</dbReference>
<dbReference type="SUPFAM" id="SSF47240">
    <property type="entry name" value="Ferritin-like"/>
    <property type="match status" value="1"/>
</dbReference>
<dbReference type="PROSITE" id="PS00574">
    <property type="entry name" value="FATTY_ACID_DESATUR_2"/>
    <property type="match status" value="1"/>
</dbReference>